<organism>
    <name type="scientific">Rhodopirellula baltica (strain DSM 10527 / NCIMB 13988 / SH1)</name>
    <dbReference type="NCBI Taxonomy" id="243090"/>
    <lineage>
        <taxon>Bacteria</taxon>
        <taxon>Pseudomonadati</taxon>
        <taxon>Planctomycetota</taxon>
        <taxon>Planctomycetia</taxon>
        <taxon>Pirellulales</taxon>
        <taxon>Pirellulaceae</taxon>
        <taxon>Rhodopirellula</taxon>
    </lineage>
</organism>
<feature type="chain" id="PRO_0000254357" description="ATP synthase subunit beta">
    <location>
        <begin position="1"/>
        <end position="479"/>
    </location>
</feature>
<feature type="binding site" evidence="1">
    <location>
        <begin position="158"/>
        <end position="165"/>
    </location>
    <ligand>
        <name>ATP</name>
        <dbReference type="ChEBI" id="CHEBI:30616"/>
    </ligand>
</feature>
<reference key="1">
    <citation type="journal article" date="2003" name="Proc. Natl. Acad. Sci. U.S.A.">
        <title>Complete genome sequence of the marine planctomycete Pirellula sp. strain 1.</title>
        <authorList>
            <person name="Gloeckner F.O."/>
            <person name="Kube M."/>
            <person name="Bauer M."/>
            <person name="Teeling H."/>
            <person name="Lombardot T."/>
            <person name="Ludwig W."/>
            <person name="Gade D."/>
            <person name="Beck A."/>
            <person name="Borzym K."/>
            <person name="Heitmann K."/>
            <person name="Rabus R."/>
            <person name="Schlesner H."/>
            <person name="Amann R."/>
            <person name="Reinhardt R."/>
        </authorList>
    </citation>
    <scope>NUCLEOTIDE SEQUENCE [LARGE SCALE GENOMIC DNA]</scope>
    <source>
        <strain>DSM 10527 / NCIMB 13988 / SH1</strain>
    </source>
</reference>
<comment type="function">
    <text evidence="1">Produces ATP from ADP in the presence of a proton gradient across the membrane. The catalytic sites are hosted primarily by the beta subunits.</text>
</comment>
<comment type="catalytic activity">
    <reaction evidence="1">
        <text>ATP + H2O + 4 H(+)(in) = ADP + phosphate + 5 H(+)(out)</text>
        <dbReference type="Rhea" id="RHEA:57720"/>
        <dbReference type="ChEBI" id="CHEBI:15377"/>
        <dbReference type="ChEBI" id="CHEBI:15378"/>
        <dbReference type="ChEBI" id="CHEBI:30616"/>
        <dbReference type="ChEBI" id="CHEBI:43474"/>
        <dbReference type="ChEBI" id="CHEBI:456216"/>
        <dbReference type="EC" id="7.1.2.2"/>
    </reaction>
</comment>
<comment type="subunit">
    <text evidence="1">F-type ATPases have 2 components, CF(1) - the catalytic core - and CF(0) - the membrane proton channel. CF(1) has five subunits: alpha(3), beta(3), gamma(1), delta(1), epsilon(1). CF(0) has three main subunits: a(1), b(2) and c(9-12). The alpha and beta chains form an alternating ring which encloses part of the gamma chain. CF(1) is attached to CF(0) by a central stalk formed by the gamma and epsilon chains, while a peripheral stalk is formed by the delta and b chains.</text>
</comment>
<comment type="subcellular location">
    <subcellularLocation>
        <location evidence="1">Cell inner membrane</location>
        <topology evidence="1">Peripheral membrane protein</topology>
    </subcellularLocation>
</comment>
<comment type="similarity">
    <text evidence="1">Belongs to the ATPase alpha/beta chains family.</text>
</comment>
<proteinExistence type="inferred from homology"/>
<gene>
    <name evidence="1" type="primary">atpD</name>
    <name type="ordered locus">RB10217</name>
</gene>
<evidence type="ECO:0000255" key="1">
    <source>
        <dbReference type="HAMAP-Rule" id="MF_01347"/>
    </source>
</evidence>
<keyword id="KW-0066">ATP synthesis</keyword>
<keyword id="KW-0067">ATP-binding</keyword>
<keyword id="KW-0997">Cell inner membrane</keyword>
<keyword id="KW-1003">Cell membrane</keyword>
<keyword id="KW-0139">CF(1)</keyword>
<keyword id="KW-0375">Hydrogen ion transport</keyword>
<keyword id="KW-0406">Ion transport</keyword>
<keyword id="KW-0472">Membrane</keyword>
<keyword id="KW-0547">Nucleotide-binding</keyword>
<keyword id="KW-1185">Reference proteome</keyword>
<keyword id="KW-1278">Translocase</keyword>
<keyword id="KW-0813">Transport</keyword>
<protein>
    <recommendedName>
        <fullName evidence="1">ATP synthase subunit beta</fullName>
        <ecNumber evidence="1">7.1.2.2</ecNumber>
    </recommendedName>
    <alternativeName>
        <fullName evidence="1">ATP synthase F1 sector subunit beta</fullName>
    </alternativeName>
    <alternativeName>
        <fullName evidence="1">F-ATPase subunit beta</fullName>
    </alternativeName>
</protein>
<name>ATPB_RHOBA</name>
<dbReference type="EC" id="7.1.2.2" evidence="1"/>
<dbReference type="EMBL" id="BX294151">
    <property type="protein sequence ID" value="CAD78768.1"/>
    <property type="molecule type" value="Genomic_DNA"/>
</dbReference>
<dbReference type="RefSeq" id="NP_869311.1">
    <property type="nucleotide sequence ID" value="NC_005027.1"/>
</dbReference>
<dbReference type="RefSeq" id="WP_011122672.1">
    <property type="nucleotide sequence ID" value="NC_005027.1"/>
</dbReference>
<dbReference type="SMR" id="Q7UFB5"/>
<dbReference type="FunCoup" id="Q7UFB5">
    <property type="interactions" value="397"/>
</dbReference>
<dbReference type="STRING" id="243090.RB10217"/>
<dbReference type="EnsemblBacteria" id="CAD78768">
    <property type="protein sequence ID" value="CAD78768"/>
    <property type="gene ID" value="RB10217"/>
</dbReference>
<dbReference type="KEGG" id="rba:RB10217"/>
<dbReference type="PATRIC" id="fig|243090.15.peg.4933"/>
<dbReference type="eggNOG" id="COG0055">
    <property type="taxonomic scope" value="Bacteria"/>
</dbReference>
<dbReference type="HOGENOM" id="CLU_022398_0_2_0"/>
<dbReference type="InParanoid" id="Q7UFB5"/>
<dbReference type="OrthoDB" id="9801639at2"/>
<dbReference type="Proteomes" id="UP000001025">
    <property type="component" value="Chromosome"/>
</dbReference>
<dbReference type="GO" id="GO:0005886">
    <property type="term" value="C:plasma membrane"/>
    <property type="evidence" value="ECO:0007669"/>
    <property type="project" value="UniProtKB-SubCell"/>
</dbReference>
<dbReference type="GO" id="GO:0045259">
    <property type="term" value="C:proton-transporting ATP synthase complex"/>
    <property type="evidence" value="ECO:0007669"/>
    <property type="project" value="UniProtKB-KW"/>
</dbReference>
<dbReference type="GO" id="GO:0005524">
    <property type="term" value="F:ATP binding"/>
    <property type="evidence" value="ECO:0007669"/>
    <property type="project" value="UniProtKB-UniRule"/>
</dbReference>
<dbReference type="GO" id="GO:0016887">
    <property type="term" value="F:ATP hydrolysis activity"/>
    <property type="evidence" value="ECO:0007669"/>
    <property type="project" value="InterPro"/>
</dbReference>
<dbReference type="GO" id="GO:0046933">
    <property type="term" value="F:proton-transporting ATP synthase activity, rotational mechanism"/>
    <property type="evidence" value="ECO:0007669"/>
    <property type="project" value="UniProtKB-UniRule"/>
</dbReference>
<dbReference type="CDD" id="cd18110">
    <property type="entry name" value="ATP-synt_F1_beta_C"/>
    <property type="match status" value="1"/>
</dbReference>
<dbReference type="CDD" id="cd18115">
    <property type="entry name" value="ATP-synt_F1_beta_N"/>
    <property type="match status" value="1"/>
</dbReference>
<dbReference type="CDD" id="cd01133">
    <property type="entry name" value="F1-ATPase_beta_CD"/>
    <property type="match status" value="1"/>
</dbReference>
<dbReference type="FunFam" id="1.10.1140.10:FF:000001">
    <property type="entry name" value="ATP synthase subunit beta"/>
    <property type="match status" value="1"/>
</dbReference>
<dbReference type="FunFam" id="2.40.10.170:FF:000005">
    <property type="entry name" value="ATP synthase subunit beta"/>
    <property type="match status" value="1"/>
</dbReference>
<dbReference type="FunFam" id="3.40.50.300:FF:000004">
    <property type="entry name" value="ATP synthase subunit beta"/>
    <property type="match status" value="1"/>
</dbReference>
<dbReference type="Gene3D" id="2.40.10.170">
    <property type="match status" value="1"/>
</dbReference>
<dbReference type="Gene3D" id="1.10.1140.10">
    <property type="entry name" value="Bovine Mitochondrial F1-atpase, Atp Synthase Beta Chain, Chain D, domain 3"/>
    <property type="match status" value="1"/>
</dbReference>
<dbReference type="Gene3D" id="3.40.50.300">
    <property type="entry name" value="P-loop containing nucleotide triphosphate hydrolases"/>
    <property type="match status" value="1"/>
</dbReference>
<dbReference type="HAMAP" id="MF_01347">
    <property type="entry name" value="ATP_synth_beta_bact"/>
    <property type="match status" value="1"/>
</dbReference>
<dbReference type="InterPro" id="IPR003593">
    <property type="entry name" value="AAA+_ATPase"/>
</dbReference>
<dbReference type="InterPro" id="IPR055190">
    <property type="entry name" value="ATP-synt_VA_C"/>
</dbReference>
<dbReference type="InterPro" id="IPR005722">
    <property type="entry name" value="ATP_synth_F1_bsu"/>
</dbReference>
<dbReference type="InterPro" id="IPR020003">
    <property type="entry name" value="ATPase_a/bsu_AS"/>
</dbReference>
<dbReference type="InterPro" id="IPR050053">
    <property type="entry name" value="ATPase_alpha/beta_chains"/>
</dbReference>
<dbReference type="InterPro" id="IPR004100">
    <property type="entry name" value="ATPase_F1/V1/A1_a/bsu_N"/>
</dbReference>
<dbReference type="InterPro" id="IPR036121">
    <property type="entry name" value="ATPase_F1/V1/A1_a/bsu_N_sf"/>
</dbReference>
<dbReference type="InterPro" id="IPR000194">
    <property type="entry name" value="ATPase_F1/V1/A1_a/bsu_nucl-bd"/>
</dbReference>
<dbReference type="InterPro" id="IPR024034">
    <property type="entry name" value="ATPase_F1/V1_b/a_C"/>
</dbReference>
<dbReference type="InterPro" id="IPR027417">
    <property type="entry name" value="P-loop_NTPase"/>
</dbReference>
<dbReference type="NCBIfam" id="TIGR01039">
    <property type="entry name" value="atpD"/>
    <property type="match status" value="1"/>
</dbReference>
<dbReference type="PANTHER" id="PTHR15184">
    <property type="entry name" value="ATP SYNTHASE"/>
    <property type="match status" value="1"/>
</dbReference>
<dbReference type="PANTHER" id="PTHR15184:SF71">
    <property type="entry name" value="ATP SYNTHASE SUBUNIT BETA, MITOCHONDRIAL"/>
    <property type="match status" value="1"/>
</dbReference>
<dbReference type="Pfam" id="PF00006">
    <property type="entry name" value="ATP-synt_ab"/>
    <property type="match status" value="1"/>
</dbReference>
<dbReference type="Pfam" id="PF02874">
    <property type="entry name" value="ATP-synt_ab_N"/>
    <property type="match status" value="1"/>
</dbReference>
<dbReference type="Pfam" id="PF22919">
    <property type="entry name" value="ATP-synt_VA_C"/>
    <property type="match status" value="1"/>
</dbReference>
<dbReference type="SMART" id="SM00382">
    <property type="entry name" value="AAA"/>
    <property type="match status" value="1"/>
</dbReference>
<dbReference type="SUPFAM" id="SSF47917">
    <property type="entry name" value="C-terminal domain of alpha and beta subunits of F1 ATP synthase"/>
    <property type="match status" value="1"/>
</dbReference>
<dbReference type="SUPFAM" id="SSF50615">
    <property type="entry name" value="N-terminal domain of alpha and beta subunits of F1 ATP synthase"/>
    <property type="match status" value="1"/>
</dbReference>
<dbReference type="SUPFAM" id="SSF52540">
    <property type="entry name" value="P-loop containing nucleoside triphosphate hydrolases"/>
    <property type="match status" value="1"/>
</dbReference>
<dbReference type="PROSITE" id="PS00152">
    <property type="entry name" value="ATPASE_ALPHA_BETA"/>
    <property type="match status" value="1"/>
</dbReference>
<sequence>MSTATATGRVTQVIGSTFDAEFPEGQLPKIYNALTIQSEHKGVTIDLTGEVQQHLGGGRVRAIALGSTEGMMRGMNVVDTGKPVSVPVGKATLGRVFNVLGQPIDKRGDVQADDYWPIHRQAPPVNELSTNTELFETGIKVVDLLTPFVRGGKAGLFGGAGLGKTVILTELIARIASSHGGYSVFAGVGERTREGTDLWLEMQETEIGSTGRNVIEQTCMVFGQMNEPPGSRLRVALSALTMAEYFRDTTGADTLLFVDNIFRFSQAGSEVSALLGRMPSAVGYQPTLATEMGALQERITSTKQGAITSVQAVYVPADDPTDPAPATAFGQLDAFIYLERSISEKGIYPAIDPLASNSRILDPQYVGDRHYTIARRVQTILQRYRELQDIIAILGVDELSEEDKTIVHRARRIERFLSQPFLVAEVFIGKPGEITSLEDTIRSFEGICDGKYDHLPEQAFMYVGAIEQAEEQAKKMESK</sequence>
<accession>Q7UFB5</accession>